<evidence type="ECO:0000250" key="1"/>
<evidence type="ECO:0000255" key="2"/>
<evidence type="ECO:0000255" key="3">
    <source>
        <dbReference type="PROSITE-ProRule" id="PRU00251"/>
    </source>
</evidence>
<evidence type="ECO:0000256" key="4">
    <source>
        <dbReference type="SAM" id="MobiDB-lite"/>
    </source>
</evidence>
<evidence type="ECO:0000269" key="5">
    <source>
    </source>
</evidence>
<evidence type="ECO:0000269" key="6">
    <source>
    </source>
</evidence>
<evidence type="ECO:0000269" key="7">
    <source>
    </source>
</evidence>
<evidence type="ECO:0000269" key="8">
    <source>
    </source>
</evidence>
<evidence type="ECO:0000303" key="9">
    <source>
    </source>
</evidence>
<evidence type="ECO:0000305" key="10"/>
<protein>
    <recommendedName>
        <fullName>Myocyte-specific enhancer factor 2B</fullName>
    </recommendedName>
</protein>
<sequence>MGRKKIQISRILDQRNRQVTFTKRKFGLMKKAYELSVLCDCDIALIIFNSAQRLFQYASSDMDRVLLKYTEYSEPHESRTNADILQTLKRRGVGLDGPELDMEEGPEGPGEKLLRTLGGDRGSASPRPRIYPVAPAMSVSELSYRVPPATPGCDPGGLGEVPSVHSRPAYFRPPGLGHPIFSPSHLASKTPPPLYLATDGRRPDLPPGLVGARGGLGTSRSLYSGLQSPGAPGPALGSFAFLPSGSTDCSPGDAAQGPLQPSPWPPTRDAVDPARPVARSLCKEGPPSRGASPPTPPVSIKSERLSPVTGTSGDFPRSFPYPLLLARPLAEPLRPSASLHRLTPDSWPR</sequence>
<accession>O55087</accession>
<accession>O55088</accession>
<accession>O55089</accession>
<accession>O55090</accession>
<accession>O55231</accession>
<accession>Q61843</accession>
<feature type="chain" id="PRO_0000199432" description="Myocyte-specific enhancer factor 2B">
    <location>
        <begin position="1"/>
        <end position="349"/>
    </location>
</feature>
<feature type="domain" description="MADS-box" evidence="3">
    <location>
        <begin position="3"/>
        <end position="57"/>
    </location>
</feature>
<feature type="DNA-binding region" description="Mef2-type" evidence="2">
    <location>
        <begin position="58"/>
        <end position="86"/>
    </location>
</feature>
<feature type="region of interest" description="Disordered" evidence="4">
    <location>
        <begin position="237"/>
        <end position="317"/>
    </location>
</feature>
<feature type="region of interest" description="Disordered" evidence="4">
    <location>
        <begin position="330"/>
        <end position="349"/>
    </location>
</feature>
<feature type="splice variant" id="VSP_006244" description="In isoform B-4." evidence="9">
    <original>VGARGGLGTSRSLYSGLQSPGAP</original>
    <variation>IAARETQLRDPCNPHPGHQRGTL</variation>
    <location>
        <begin position="210"/>
        <end position="232"/>
    </location>
</feature>
<feature type="splice variant" id="VSP_006243" description="In isoform B-2." evidence="9">
    <location>
        <begin position="210"/>
        <end position="219"/>
    </location>
</feature>
<feature type="splice variant" id="VSP_006245" description="In isoform B-3." evidence="9">
    <original>RSLYSGLQSPGAPGPALGSFAFL</original>
    <variation>IAARETQLRDPCNPHPGHQRGTL</variation>
    <location>
        <begin position="220"/>
        <end position="242"/>
    </location>
</feature>
<feature type="splice variant" id="VSP_006246" description="In isoform B-4." evidence="9">
    <location>
        <begin position="233"/>
        <end position="349"/>
    </location>
</feature>
<feature type="splice variant" id="VSP_006247" description="In isoform B-3." evidence="9">
    <location>
        <begin position="243"/>
        <end position="349"/>
    </location>
</feature>
<feature type="sequence conflict" description="In Ref. 3; BAA24542/BAA24544." evidence="10" ref="3">
    <original>A</original>
    <variation>G</variation>
    <location>
        <position position="291"/>
    </location>
</feature>
<reference key="1">
    <citation type="journal article" date="1995" name="Biochem. Biophys. Res. Commun.">
        <title>The MEF2B homologue differentially expressed in mouse embryonal carcinoma cells.</title>
        <authorList>
            <person name="Hidaka K."/>
            <person name="Morisaki T."/>
            <person name="Byun S.-H."/>
            <person name="Hashido K."/>
            <person name="Toyama K."/>
            <person name="Mukai T."/>
        </authorList>
    </citation>
    <scope>NUCLEOTIDE SEQUENCE [MRNA] (ISOFORM B-1)</scope>
    <scope>TISSUE SPECIFICITY</scope>
    <source>
        <tissue>Brain</tissue>
    </source>
</reference>
<reference key="2">
    <citation type="journal article" date="1996" name="Mol. Cell. Biol.">
        <title>MEF2B is a potent transactivator expressed in early myogenic lineages.</title>
        <authorList>
            <person name="Molkentin J.D."/>
            <person name="Firulli A.B."/>
            <person name="Black B.L."/>
            <person name="Martin J.F."/>
            <person name="Hustad C.M."/>
            <person name="Copeland N.G."/>
            <person name="Jenkins N.A."/>
            <person name="Lyons G."/>
            <person name="Olson E.N."/>
        </authorList>
    </citation>
    <scope>NUCLEOTIDE SEQUENCE (ISOFORM B-1)</scope>
    <scope>FUNCTION</scope>
    <scope>TISSUE SPECIFICITY</scope>
    <source>
        <strain>129/Sv</strain>
        <tissue>Heart</tissue>
    </source>
</reference>
<reference key="3">
    <citation type="journal article" date="1997" name="J. Biochem.">
        <title>Mouse Mef2b gene: unique member of MEF2 gene family.</title>
        <authorList>
            <person name="Morisaki T."/>
            <person name="Sermsuvitayawong K."/>
            <person name="Byun S.-H."/>
            <person name="Matsuda Y."/>
            <person name="Hidaka K."/>
            <person name="Morisaki H."/>
            <person name="Mukai T."/>
        </authorList>
    </citation>
    <scope>NUCLEOTIDE SEQUENCE [GENOMIC DNA / MRNA] (ISOFORMS B-1; B-2; B-3 AND B-4)</scope>
    <scope>FUNCTION</scope>
    <scope>TISSUE SPECIFICITY</scope>
    <scope>DEVELOPMENTAL STAGE</scope>
    <source>
        <strain>129/Sv</strain>
        <tissue>Teratocarcinoma</tissue>
    </source>
</reference>
<reference key="4">
    <citation type="journal article" date="2001" name="J. Biol. Chem.">
        <title>Mechanism for nucleocytoplasmic shuttling of histone deacetylase 7.</title>
        <authorList>
            <person name="Kao H.-Y."/>
            <person name="Verdel A."/>
            <person name="Tsai C.-C."/>
            <person name="Simon C."/>
            <person name="Juguilon H."/>
            <person name="Khochbin S."/>
        </authorList>
    </citation>
    <scope>INTERACTION WITH HDAC7</scope>
</reference>
<keyword id="KW-0010">Activator</keyword>
<keyword id="KW-0025">Alternative splicing</keyword>
<keyword id="KW-0238">DNA-binding</keyword>
<keyword id="KW-0539">Nucleus</keyword>
<keyword id="KW-1185">Reference proteome</keyword>
<keyword id="KW-0804">Transcription</keyword>
<keyword id="KW-0805">Transcription regulation</keyword>
<proteinExistence type="evidence at protein level"/>
<organism>
    <name type="scientific">Mus musculus</name>
    <name type="common">Mouse</name>
    <dbReference type="NCBI Taxonomy" id="10090"/>
    <lineage>
        <taxon>Eukaryota</taxon>
        <taxon>Metazoa</taxon>
        <taxon>Chordata</taxon>
        <taxon>Craniata</taxon>
        <taxon>Vertebrata</taxon>
        <taxon>Euteleostomi</taxon>
        <taxon>Mammalia</taxon>
        <taxon>Eutheria</taxon>
        <taxon>Euarchontoglires</taxon>
        <taxon>Glires</taxon>
        <taxon>Rodentia</taxon>
        <taxon>Myomorpha</taxon>
        <taxon>Muroidea</taxon>
        <taxon>Muridae</taxon>
        <taxon>Murinae</taxon>
        <taxon>Mus</taxon>
        <taxon>Mus</taxon>
    </lineage>
</organism>
<name>MEF2B_MOUSE</name>
<dbReference type="EMBL" id="D50311">
    <property type="protein sequence ID" value="BAA08850.1"/>
    <property type="molecule type" value="mRNA"/>
</dbReference>
<dbReference type="EMBL" id="D87831">
    <property type="protein sequence ID" value="BAA24539.1"/>
    <property type="molecule type" value="Genomic_DNA"/>
</dbReference>
<dbReference type="EMBL" id="D87831">
    <property type="protein sequence ID" value="BAA24540.1"/>
    <property type="molecule type" value="Genomic_DNA"/>
</dbReference>
<dbReference type="EMBL" id="D87831">
    <property type="protein sequence ID" value="BAA24541.1"/>
    <property type="molecule type" value="Genomic_DNA"/>
</dbReference>
<dbReference type="EMBL" id="D87835">
    <property type="protein sequence ID" value="BAA24544.1"/>
    <property type="molecule type" value="mRNA"/>
</dbReference>
<dbReference type="EMBL" id="D87836">
    <property type="protein sequence ID" value="BAA24545.1"/>
    <property type="molecule type" value="mRNA"/>
</dbReference>
<dbReference type="EMBL" id="D87834">
    <property type="protein sequence ID" value="BAA24543.1"/>
    <property type="molecule type" value="mRNA"/>
</dbReference>
<dbReference type="EMBL" id="D87833">
    <property type="protein sequence ID" value="BAA24542.1"/>
    <property type="molecule type" value="mRNA"/>
</dbReference>
<dbReference type="CCDS" id="CCDS22361.1">
    <molecule id="O55087-1"/>
</dbReference>
<dbReference type="CCDS" id="CCDS40368.1">
    <molecule id="O55087-2"/>
</dbReference>
<dbReference type="PIR" id="JC5881">
    <property type="entry name" value="JC5881"/>
</dbReference>
<dbReference type="PIR" id="JC5882">
    <property type="entry name" value="JC5882"/>
</dbReference>
<dbReference type="PIR" id="JC5883">
    <property type="entry name" value="JC5883"/>
</dbReference>
<dbReference type="SMR" id="O55087"/>
<dbReference type="FunCoup" id="O55087">
    <property type="interactions" value="65"/>
</dbReference>
<dbReference type="STRING" id="10090.ENSMUSP00000105773"/>
<dbReference type="GlyGen" id="O55087">
    <property type="glycosylation" value="2 sites"/>
</dbReference>
<dbReference type="iPTMnet" id="O55087"/>
<dbReference type="PhosphoSitePlus" id="O55087"/>
<dbReference type="PaxDb" id="10090-ENSMUSP00000105773"/>
<dbReference type="ProteomicsDB" id="293455">
    <molecule id="O55087-1"/>
</dbReference>
<dbReference type="ProteomicsDB" id="293456">
    <molecule id="O55087-2"/>
</dbReference>
<dbReference type="AGR" id="MGI:104526"/>
<dbReference type="MGI" id="MGI:104526">
    <property type="gene designation" value="Mef2b"/>
</dbReference>
<dbReference type="eggNOG" id="KOG0014">
    <property type="taxonomic scope" value="Eukaryota"/>
</dbReference>
<dbReference type="InParanoid" id="O55087"/>
<dbReference type="PhylomeDB" id="O55087"/>
<dbReference type="Reactome" id="R-MMU-525793">
    <property type="pathway name" value="Myogenesis"/>
</dbReference>
<dbReference type="PRO" id="PR:O55087"/>
<dbReference type="Proteomes" id="UP000000589">
    <property type="component" value="Unplaced"/>
</dbReference>
<dbReference type="RNAct" id="O55087">
    <property type="molecule type" value="protein"/>
</dbReference>
<dbReference type="GO" id="GO:0005634">
    <property type="term" value="C:nucleus"/>
    <property type="evidence" value="ECO:0000305"/>
    <property type="project" value="MGI"/>
</dbReference>
<dbReference type="GO" id="GO:0001228">
    <property type="term" value="F:DNA-binding transcription activator activity, RNA polymerase II-specific"/>
    <property type="evidence" value="ECO:0000314"/>
    <property type="project" value="NTNU_SB"/>
</dbReference>
<dbReference type="GO" id="GO:0003700">
    <property type="term" value="F:DNA-binding transcription factor activity"/>
    <property type="evidence" value="ECO:0000314"/>
    <property type="project" value="MGI"/>
</dbReference>
<dbReference type="GO" id="GO:0042826">
    <property type="term" value="F:histone deacetylase binding"/>
    <property type="evidence" value="ECO:0000314"/>
    <property type="project" value="MGI"/>
</dbReference>
<dbReference type="GO" id="GO:0046983">
    <property type="term" value="F:protein dimerization activity"/>
    <property type="evidence" value="ECO:0007669"/>
    <property type="project" value="InterPro"/>
</dbReference>
<dbReference type="GO" id="GO:0000978">
    <property type="term" value="F:RNA polymerase II cis-regulatory region sequence-specific DNA binding"/>
    <property type="evidence" value="ECO:0000314"/>
    <property type="project" value="NTNU_SB"/>
</dbReference>
<dbReference type="GO" id="GO:0045944">
    <property type="term" value="P:positive regulation of transcription by RNA polymerase II"/>
    <property type="evidence" value="ECO:0000314"/>
    <property type="project" value="MGI"/>
</dbReference>
<dbReference type="GO" id="GO:0006355">
    <property type="term" value="P:regulation of DNA-templated transcription"/>
    <property type="evidence" value="ECO:0000314"/>
    <property type="project" value="MGI"/>
</dbReference>
<dbReference type="CDD" id="cd00265">
    <property type="entry name" value="MADS_MEF2_like"/>
    <property type="match status" value="1"/>
</dbReference>
<dbReference type="FunFam" id="3.40.1810.10:FF:000001">
    <property type="entry name" value="Myocyte-specific enhancer factor 2A homolog"/>
    <property type="match status" value="1"/>
</dbReference>
<dbReference type="Gene3D" id="3.40.1810.10">
    <property type="entry name" value="Transcription factor, MADS-box"/>
    <property type="match status" value="1"/>
</dbReference>
<dbReference type="InterPro" id="IPR033896">
    <property type="entry name" value="MEF2-like_N"/>
</dbReference>
<dbReference type="InterPro" id="IPR002100">
    <property type="entry name" value="TF_MADSbox"/>
</dbReference>
<dbReference type="InterPro" id="IPR036879">
    <property type="entry name" value="TF_MADSbox_sf"/>
</dbReference>
<dbReference type="PANTHER" id="PTHR11945">
    <property type="entry name" value="MADS BOX PROTEIN"/>
    <property type="match status" value="1"/>
</dbReference>
<dbReference type="PANTHER" id="PTHR11945:SF383">
    <property type="entry name" value="MYOCYTE-SPECIFIC ENHANCER FACTOR 2B"/>
    <property type="match status" value="1"/>
</dbReference>
<dbReference type="Pfam" id="PF00319">
    <property type="entry name" value="SRF-TF"/>
    <property type="match status" value="1"/>
</dbReference>
<dbReference type="PRINTS" id="PR00404">
    <property type="entry name" value="MADSDOMAIN"/>
</dbReference>
<dbReference type="SMART" id="SM00432">
    <property type="entry name" value="MADS"/>
    <property type="match status" value="1"/>
</dbReference>
<dbReference type="SUPFAM" id="SSF55455">
    <property type="entry name" value="SRF-like"/>
    <property type="match status" value="1"/>
</dbReference>
<dbReference type="PROSITE" id="PS00350">
    <property type="entry name" value="MADS_BOX_1"/>
    <property type="match status" value="1"/>
</dbReference>
<dbReference type="PROSITE" id="PS50066">
    <property type="entry name" value="MADS_BOX_2"/>
    <property type="match status" value="1"/>
</dbReference>
<comment type="function">
    <text evidence="7 8">Transcriptional activator which binds specifically to the MEF2 element, 5'-YTA[AT](4)TAR-3', found in numerous muscle-specific genes. Activates transcription via this element. May be involved in muscle-specific and/or growth factor-related transcription.</text>
</comment>
<comment type="subunit">
    <text evidence="1 5">Heterodimer. Interacts with HDAC9 (By similarity). Interacts with HDAC7.</text>
</comment>
<comment type="subcellular location">
    <subcellularLocation>
        <location evidence="3">Nucleus</location>
    </subcellularLocation>
</comment>
<comment type="alternative products">
    <event type="alternative splicing"/>
    <isoform>
        <id>O55087-1</id>
        <name>B-1</name>
        <sequence type="displayed"/>
    </isoform>
    <isoform>
        <id>O55087-2</id>
        <name>B-2</name>
        <sequence type="described" ref="VSP_006243"/>
    </isoform>
    <isoform>
        <id>O55087-3</id>
        <name>B-3</name>
        <sequence type="described" ref="VSP_006245 VSP_006247"/>
    </isoform>
    <isoform>
        <id>O55087-4</id>
        <name>B-4</name>
        <sequence type="described" ref="VSP_006244 VSP_006246"/>
    </isoform>
</comment>
<comment type="tissue specificity">
    <text evidence="6 7 8">Highest expression found in embryonic heart and skeletal muscle. Low levels found in adult spleen, lung and testis while no expression is found in adult heart, brain or skeletal muscle.</text>
</comment>
<comment type="developmental stage">
    <text evidence="8">Higher expression in early embryo than in adult.</text>
</comment>
<comment type="similarity">
    <text evidence="10">Belongs to the MEF2 family.</text>
</comment>
<gene>
    <name type="primary">Mef2b</name>
</gene>